<proteinExistence type="predicted"/>
<dbReference type="EMBL" id="AE000782">
    <property type="protein sequence ID" value="AAB89065.1"/>
    <property type="molecule type" value="Genomic_DNA"/>
</dbReference>
<dbReference type="PIR" id="D69523">
    <property type="entry name" value="D69523"/>
</dbReference>
<dbReference type="STRING" id="224325.AF_2188"/>
<dbReference type="PaxDb" id="224325-AF_2188"/>
<dbReference type="EnsemblBacteria" id="AAB89065">
    <property type="protein sequence ID" value="AAB89065"/>
    <property type="gene ID" value="AF_2188"/>
</dbReference>
<dbReference type="KEGG" id="afu:AF_2188"/>
<dbReference type="HOGENOM" id="CLU_2419855_0_0_2"/>
<dbReference type="Proteomes" id="UP000002199">
    <property type="component" value="Chromosome"/>
</dbReference>
<reference key="1">
    <citation type="journal article" date="1997" name="Nature">
        <title>The complete genome sequence of the hyperthermophilic, sulphate-reducing archaeon Archaeoglobus fulgidus.</title>
        <authorList>
            <person name="Klenk H.-P."/>
            <person name="Clayton R.A."/>
            <person name="Tomb J.-F."/>
            <person name="White O."/>
            <person name="Nelson K.E."/>
            <person name="Ketchum K.A."/>
            <person name="Dodson R.J."/>
            <person name="Gwinn M.L."/>
            <person name="Hickey E.K."/>
            <person name="Peterson J.D."/>
            <person name="Richardson D.L."/>
            <person name="Kerlavage A.R."/>
            <person name="Graham D.E."/>
            <person name="Kyrpides N.C."/>
            <person name="Fleischmann R.D."/>
            <person name="Quackenbush J."/>
            <person name="Lee N.H."/>
            <person name="Sutton G.G."/>
            <person name="Gill S.R."/>
            <person name="Kirkness E.F."/>
            <person name="Dougherty B.A."/>
            <person name="McKenney K."/>
            <person name="Adams M.D."/>
            <person name="Loftus B.J."/>
            <person name="Peterson S.N."/>
            <person name="Reich C.I."/>
            <person name="McNeil L.K."/>
            <person name="Badger J.H."/>
            <person name="Glodek A."/>
            <person name="Zhou L."/>
            <person name="Overbeek R."/>
            <person name="Gocayne J.D."/>
            <person name="Weidman J.F."/>
            <person name="McDonald L.A."/>
            <person name="Utterback T.R."/>
            <person name="Cotton M.D."/>
            <person name="Spriggs T."/>
            <person name="Artiach P."/>
            <person name="Kaine B.P."/>
            <person name="Sykes S.M."/>
            <person name="Sadow P.W."/>
            <person name="D'Andrea K.P."/>
            <person name="Bowman C."/>
            <person name="Fujii C."/>
            <person name="Garland S.A."/>
            <person name="Mason T.M."/>
            <person name="Olsen G.J."/>
            <person name="Fraser C.M."/>
            <person name="Smith H.O."/>
            <person name="Woese C.R."/>
            <person name="Venter J.C."/>
        </authorList>
    </citation>
    <scope>NUCLEOTIDE SEQUENCE [LARGE SCALE GENOMIC DNA]</scope>
    <source>
        <strain>ATCC 49558 / DSM 4304 / JCM 9628 / NBRC 100126 / VC-16</strain>
    </source>
</reference>
<keyword id="KW-1185">Reference proteome</keyword>
<feature type="chain" id="PRO_0000128116" description="Uncharacterized protein AF_2188">
    <location>
        <begin position="1"/>
        <end position="91"/>
    </location>
</feature>
<organism>
    <name type="scientific">Archaeoglobus fulgidus (strain ATCC 49558 / DSM 4304 / JCM 9628 / NBRC 100126 / VC-16)</name>
    <dbReference type="NCBI Taxonomy" id="224325"/>
    <lineage>
        <taxon>Archaea</taxon>
        <taxon>Methanobacteriati</taxon>
        <taxon>Methanobacteriota</taxon>
        <taxon>Archaeoglobi</taxon>
        <taxon>Archaeoglobales</taxon>
        <taxon>Archaeoglobaceae</taxon>
        <taxon>Archaeoglobus</taxon>
    </lineage>
</organism>
<accession>O28095</accession>
<name>Y2188_ARCFU</name>
<protein>
    <recommendedName>
        <fullName>Uncharacterized protein AF_2188</fullName>
    </recommendedName>
</protein>
<gene>
    <name type="ordered locus">AF_2188</name>
</gene>
<sequence>MVIVFVVSFLCIEEMRTLSISSRTFPRIEASIPFKADVISWMGIFLFWMSIVSHSGISICSCMGGVESLPFLISKERCNSTKKLNCRLVWP</sequence>